<gene>
    <name evidence="1" type="primary">ilvC</name>
    <name type="ordered locus">RPA2035</name>
</gene>
<reference key="1">
    <citation type="journal article" date="2004" name="Nat. Biotechnol.">
        <title>Complete genome sequence of the metabolically versatile photosynthetic bacterium Rhodopseudomonas palustris.</title>
        <authorList>
            <person name="Larimer F.W."/>
            <person name="Chain P."/>
            <person name="Hauser L."/>
            <person name="Lamerdin J.E."/>
            <person name="Malfatti S."/>
            <person name="Do L."/>
            <person name="Land M.L."/>
            <person name="Pelletier D.A."/>
            <person name="Beatty J.T."/>
            <person name="Lang A.S."/>
            <person name="Tabita F.R."/>
            <person name="Gibson J.L."/>
            <person name="Hanson T.E."/>
            <person name="Bobst C."/>
            <person name="Torres y Torres J.L."/>
            <person name="Peres C."/>
            <person name="Harrison F.H."/>
            <person name="Gibson J."/>
            <person name="Harwood C.S."/>
        </authorList>
    </citation>
    <scope>NUCLEOTIDE SEQUENCE [LARGE SCALE GENOMIC DNA]</scope>
    <source>
        <strain>ATCC BAA-98 / CGA009</strain>
    </source>
</reference>
<evidence type="ECO:0000255" key="1">
    <source>
        <dbReference type="HAMAP-Rule" id="MF_00435"/>
    </source>
</evidence>
<evidence type="ECO:0000255" key="2">
    <source>
        <dbReference type="PROSITE-ProRule" id="PRU01197"/>
    </source>
</evidence>
<evidence type="ECO:0000255" key="3">
    <source>
        <dbReference type="PROSITE-ProRule" id="PRU01198"/>
    </source>
</evidence>
<keyword id="KW-0028">Amino-acid biosynthesis</keyword>
<keyword id="KW-0100">Branched-chain amino acid biosynthesis</keyword>
<keyword id="KW-0460">Magnesium</keyword>
<keyword id="KW-0479">Metal-binding</keyword>
<keyword id="KW-0521">NADP</keyword>
<keyword id="KW-0560">Oxidoreductase</keyword>
<proteinExistence type="inferred from homology"/>
<protein>
    <recommendedName>
        <fullName evidence="1">Ketol-acid reductoisomerase (NADP(+))</fullName>
        <shortName evidence="1">KARI</shortName>
        <ecNumber evidence="1">1.1.1.86</ecNumber>
    </recommendedName>
    <alternativeName>
        <fullName evidence="1">Acetohydroxy-acid isomeroreductase</fullName>
        <shortName evidence="1">AHIR</shortName>
    </alternativeName>
    <alternativeName>
        <fullName evidence="1">Alpha-keto-beta-hydroxylacyl reductoisomerase</fullName>
    </alternativeName>
    <alternativeName>
        <fullName evidence="1">Ketol-acid reductoisomerase type 1</fullName>
    </alternativeName>
    <alternativeName>
        <fullName evidence="1">Ketol-acid reductoisomerase type I</fullName>
    </alternativeName>
</protein>
<name>ILVC_RHOPA</name>
<feature type="chain" id="PRO_0000151350" description="Ketol-acid reductoisomerase (NADP(+))">
    <location>
        <begin position="1"/>
        <end position="339"/>
    </location>
</feature>
<feature type="domain" description="KARI N-terminal Rossmann" evidence="2">
    <location>
        <begin position="1"/>
        <end position="182"/>
    </location>
</feature>
<feature type="domain" description="KARI C-terminal knotted" evidence="3">
    <location>
        <begin position="183"/>
        <end position="328"/>
    </location>
</feature>
<feature type="active site" evidence="1">
    <location>
        <position position="108"/>
    </location>
</feature>
<feature type="binding site" evidence="1">
    <location>
        <begin position="24"/>
        <end position="27"/>
    </location>
    <ligand>
        <name>NADP(+)</name>
        <dbReference type="ChEBI" id="CHEBI:58349"/>
    </ligand>
</feature>
<feature type="binding site" evidence="1">
    <location>
        <position position="48"/>
    </location>
    <ligand>
        <name>NADP(+)</name>
        <dbReference type="ChEBI" id="CHEBI:58349"/>
    </ligand>
</feature>
<feature type="binding site" evidence="1">
    <location>
        <position position="51"/>
    </location>
    <ligand>
        <name>NADP(+)</name>
        <dbReference type="ChEBI" id="CHEBI:58349"/>
    </ligand>
</feature>
<feature type="binding site" evidence="1">
    <location>
        <position position="53"/>
    </location>
    <ligand>
        <name>NADP(+)</name>
        <dbReference type="ChEBI" id="CHEBI:58349"/>
    </ligand>
</feature>
<feature type="binding site" evidence="1">
    <location>
        <begin position="83"/>
        <end position="86"/>
    </location>
    <ligand>
        <name>NADP(+)</name>
        <dbReference type="ChEBI" id="CHEBI:58349"/>
    </ligand>
</feature>
<feature type="binding site" evidence="1">
    <location>
        <position position="134"/>
    </location>
    <ligand>
        <name>NADP(+)</name>
        <dbReference type="ChEBI" id="CHEBI:58349"/>
    </ligand>
</feature>
<feature type="binding site" evidence="1">
    <location>
        <position position="191"/>
    </location>
    <ligand>
        <name>Mg(2+)</name>
        <dbReference type="ChEBI" id="CHEBI:18420"/>
        <label>1</label>
    </ligand>
</feature>
<feature type="binding site" evidence="1">
    <location>
        <position position="191"/>
    </location>
    <ligand>
        <name>Mg(2+)</name>
        <dbReference type="ChEBI" id="CHEBI:18420"/>
        <label>2</label>
    </ligand>
</feature>
<feature type="binding site" evidence="1">
    <location>
        <position position="195"/>
    </location>
    <ligand>
        <name>Mg(2+)</name>
        <dbReference type="ChEBI" id="CHEBI:18420"/>
        <label>1</label>
    </ligand>
</feature>
<feature type="binding site" evidence="1">
    <location>
        <position position="227"/>
    </location>
    <ligand>
        <name>Mg(2+)</name>
        <dbReference type="ChEBI" id="CHEBI:18420"/>
        <label>2</label>
    </ligand>
</feature>
<feature type="binding site" evidence="1">
    <location>
        <position position="231"/>
    </location>
    <ligand>
        <name>Mg(2+)</name>
        <dbReference type="ChEBI" id="CHEBI:18420"/>
        <label>2</label>
    </ligand>
</feature>
<feature type="binding site" evidence="1">
    <location>
        <position position="252"/>
    </location>
    <ligand>
        <name>substrate</name>
    </ligand>
</feature>
<organism>
    <name type="scientific">Rhodopseudomonas palustris (strain ATCC BAA-98 / CGA009)</name>
    <dbReference type="NCBI Taxonomy" id="258594"/>
    <lineage>
        <taxon>Bacteria</taxon>
        <taxon>Pseudomonadati</taxon>
        <taxon>Pseudomonadota</taxon>
        <taxon>Alphaproteobacteria</taxon>
        <taxon>Hyphomicrobiales</taxon>
        <taxon>Nitrobacteraceae</taxon>
        <taxon>Rhodopseudomonas</taxon>
    </lineage>
</organism>
<comment type="function">
    <text evidence="1">Involved in the biosynthesis of branched-chain amino acids (BCAA). Catalyzes an alkyl-migration followed by a ketol-acid reduction of (S)-2-acetolactate (S2AL) to yield (R)-2,3-dihydroxy-isovalerate. In the isomerase reaction, S2AL is rearranged via a Mg-dependent methyl migration to produce 3-hydroxy-3-methyl-2-ketobutyrate (HMKB). In the reductase reaction, this 2-ketoacid undergoes a metal-dependent reduction by NADPH to yield (R)-2,3-dihydroxy-isovalerate.</text>
</comment>
<comment type="catalytic activity">
    <reaction evidence="1">
        <text>(2R)-2,3-dihydroxy-3-methylbutanoate + NADP(+) = (2S)-2-acetolactate + NADPH + H(+)</text>
        <dbReference type="Rhea" id="RHEA:22068"/>
        <dbReference type="ChEBI" id="CHEBI:15378"/>
        <dbReference type="ChEBI" id="CHEBI:49072"/>
        <dbReference type="ChEBI" id="CHEBI:57783"/>
        <dbReference type="ChEBI" id="CHEBI:58349"/>
        <dbReference type="ChEBI" id="CHEBI:58476"/>
        <dbReference type="EC" id="1.1.1.86"/>
    </reaction>
</comment>
<comment type="catalytic activity">
    <reaction evidence="1">
        <text>(2R,3R)-2,3-dihydroxy-3-methylpentanoate + NADP(+) = (S)-2-ethyl-2-hydroxy-3-oxobutanoate + NADPH + H(+)</text>
        <dbReference type="Rhea" id="RHEA:13493"/>
        <dbReference type="ChEBI" id="CHEBI:15378"/>
        <dbReference type="ChEBI" id="CHEBI:49256"/>
        <dbReference type="ChEBI" id="CHEBI:49258"/>
        <dbReference type="ChEBI" id="CHEBI:57783"/>
        <dbReference type="ChEBI" id="CHEBI:58349"/>
        <dbReference type="EC" id="1.1.1.86"/>
    </reaction>
</comment>
<comment type="cofactor">
    <cofactor evidence="1">
        <name>Mg(2+)</name>
        <dbReference type="ChEBI" id="CHEBI:18420"/>
    </cofactor>
    <text evidence="1">Binds 2 magnesium ions per subunit.</text>
</comment>
<comment type="pathway">
    <text evidence="1">Amino-acid biosynthesis; L-isoleucine biosynthesis; L-isoleucine from 2-oxobutanoate: step 2/4.</text>
</comment>
<comment type="pathway">
    <text evidence="1">Amino-acid biosynthesis; L-valine biosynthesis; L-valine from pyruvate: step 2/4.</text>
</comment>
<comment type="similarity">
    <text evidence="1">Belongs to the ketol-acid reductoisomerase family.</text>
</comment>
<dbReference type="EC" id="1.1.1.86" evidence="1"/>
<dbReference type="EMBL" id="BX572599">
    <property type="protein sequence ID" value="CAE27476.1"/>
    <property type="molecule type" value="Genomic_DNA"/>
</dbReference>
<dbReference type="RefSeq" id="WP_011157590.1">
    <property type="nucleotide sequence ID" value="NZ_CP116810.1"/>
</dbReference>
<dbReference type="SMR" id="Q6N869"/>
<dbReference type="STRING" id="258594.RPA2035"/>
<dbReference type="GeneID" id="66893079"/>
<dbReference type="eggNOG" id="COG0059">
    <property type="taxonomic scope" value="Bacteria"/>
</dbReference>
<dbReference type="HOGENOM" id="CLU_033821_0_1_5"/>
<dbReference type="PhylomeDB" id="Q6N869"/>
<dbReference type="UniPathway" id="UPA00047">
    <property type="reaction ID" value="UER00056"/>
</dbReference>
<dbReference type="UniPathway" id="UPA00049">
    <property type="reaction ID" value="UER00060"/>
</dbReference>
<dbReference type="GO" id="GO:0005829">
    <property type="term" value="C:cytosol"/>
    <property type="evidence" value="ECO:0007669"/>
    <property type="project" value="TreeGrafter"/>
</dbReference>
<dbReference type="GO" id="GO:0004455">
    <property type="term" value="F:ketol-acid reductoisomerase activity"/>
    <property type="evidence" value="ECO:0007669"/>
    <property type="project" value="UniProtKB-UniRule"/>
</dbReference>
<dbReference type="GO" id="GO:0000287">
    <property type="term" value="F:magnesium ion binding"/>
    <property type="evidence" value="ECO:0007669"/>
    <property type="project" value="UniProtKB-UniRule"/>
</dbReference>
<dbReference type="GO" id="GO:0050661">
    <property type="term" value="F:NADP binding"/>
    <property type="evidence" value="ECO:0007669"/>
    <property type="project" value="InterPro"/>
</dbReference>
<dbReference type="GO" id="GO:0009097">
    <property type="term" value="P:isoleucine biosynthetic process"/>
    <property type="evidence" value="ECO:0007669"/>
    <property type="project" value="UniProtKB-UniRule"/>
</dbReference>
<dbReference type="GO" id="GO:0009099">
    <property type="term" value="P:L-valine biosynthetic process"/>
    <property type="evidence" value="ECO:0007669"/>
    <property type="project" value="UniProtKB-UniRule"/>
</dbReference>
<dbReference type="FunFam" id="3.40.50.720:FF:000023">
    <property type="entry name" value="Ketol-acid reductoisomerase (NADP(+))"/>
    <property type="match status" value="1"/>
</dbReference>
<dbReference type="Gene3D" id="6.10.240.10">
    <property type="match status" value="1"/>
</dbReference>
<dbReference type="Gene3D" id="3.40.50.720">
    <property type="entry name" value="NAD(P)-binding Rossmann-like Domain"/>
    <property type="match status" value="1"/>
</dbReference>
<dbReference type="HAMAP" id="MF_00435">
    <property type="entry name" value="IlvC"/>
    <property type="match status" value="1"/>
</dbReference>
<dbReference type="InterPro" id="IPR008927">
    <property type="entry name" value="6-PGluconate_DH-like_C_sf"/>
</dbReference>
<dbReference type="InterPro" id="IPR013023">
    <property type="entry name" value="KARI"/>
</dbReference>
<dbReference type="InterPro" id="IPR000506">
    <property type="entry name" value="KARI_C"/>
</dbReference>
<dbReference type="InterPro" id="IPR013116">
    <property type="entry name" value="KARI_N"/>
</dbReference>
<dbReference type="InterPro" id="IPR014359">
    <property type="entry name" value="KARI_prok"/>
</dbReference>
<dbReference type="InterPro" id="IPR036291">
    <property type="entry name" value="NAD(P)-bd_dom_sf"/>
</dbReference>
<dbReference type="NCBIfam" id="TIGR00465">
    <property type="entry name" value="ilvC"/>
    <property type="match status" value="1"/>
</dbReference>
<dbReference type="NCBIfam" id="NF004017">
    <property type="entry name" value="PRK05479.1"/>
    <property type="match status" value="1"/>
</dbReference>
<dbReference type="NCBIfam" id="NF009940">
    <property type="entry name" value="PRK13403.1"/>
    <property type="match status" value="1"/>
</dbReference>
<dbReference type="PANTHER" id="PTHR21371">
    <property type="entry name" value="KETOL-ACID REDUCTOISOMERASE, MITOCHONDRIAL"/>
    <property type="match status" value="1"/>
</dbReference>
<dbReference type="PANTHER" id="PTHR21371:SF1">
    <property type="entry name" value="KETOL-ACID REDUCTOISOMERASE, MITOCHONDRIAL"/>
    <property type="match status" value="1"/>
</dbReference>
<dbReference type="Pfam" id="PF01450">
    <property type="entry name" value="KARI_C"/>
    <property type="match status" value="1"/>
</dbReference>
<dbReference type="Pfam" id="PF07991">
    <property type="entry name" value="KARI_N"/>
    <property type="match status" value="1"/>
</dbReference>
<dbReference type="PIRSF" id="PIRSF000116">
    <property type="entry name" value="IlvC_gammaproteo"/>
    <property type="match status" value="1"/>
</dbReference>
<dbReference type="SUPFAM" id="SSF48179">
    <property type="entry name" value="6-phosphogluconate dehydrogenase C-terminal domain-like"/>
    <property type="match status" value="1"/>
</dbReference>
<dbReference type="SUPFAM" id="SSF51735">
    <property type="entry name" value="NAD(P)-binding Rossmann-fold domains"/>
    <property type="match status" value="1"/>
</dbReference>
<dbReference type="PROSITE" id="PS51851">
    <property type="entry name" value="KARI_C"/>
    <property type="match status" value="1"/>
</dbReference>
<dbReference type="PROSITE" id="PS51850">
    <property type="entry name" value="KARI_N"/>
    <property type="match status" value="1"/>
</dbReference>
<accession>Q6N869</accession>
<sequence>MRVYYDRDADLNLIKGKKVAVIGYGSQGHAHALNLKDSGVKDVAIALRKGSASAKKAENAGFKVMEVAEAAKWADVMMMLTPDELQADIYREHLHDNMKQGAALLFAHGLNVHFNLIEPRADLDVLMVAPKGPGHTVRSEYQRGGGVPCLIAIHKDASGNAHDLGLSYASAIGGGRAGIIETTFREECETDLFGEQVVLCGGLVELIKAGFETLVEAGYAPEMAYFECLHEVKLIVDLIYEGGIANMNYSISNTAEYGEYVTGPRIVTPETKAEMKRVLADIQNGIFTRNWMLENKVNQTSFKATRAKLAQHPIEEVGAKLRDMMPWIKKGALVDKSKN</sequence>